<evidence type="ECO:0000269" key="1">
    <source>
    </source>
</evidence>
<evidence type="ECO:0000303" key="2">
    <source>
    </source>
</evidence>
<evidence type="ECO:0000303" key="3">
    <source>
    </source>
</evidence>
<evidence type="ECO:0000305" key="4"/>
<evidence type="ECO:0000305" key="5">
    <source>
    </source>
</evidence>
<evidence type="ECO:0007829" key="6">
    <source>
        <dbReference type="PDB" id="8Q3B"/>
    </source>
</evidence>
<gene>
    <name type="ordered locus">Ba71V-069</name>
    <name type="ORF">C147L</name>
</gene>
<keyword id="KW-0002">3D-structure</keyword>
<keyword id="KW-0240">DNA-directed RNA polymerase</keyword>
<keyword id="KW-1035">Host cytoplasm</keyword>
<keyword id="KW-1185">Reference proteome</keyword>
<keyword id="KW-0804">Transcription</keyword>
<keyword id="KW-1195">Viral transcription</keyword>
<keyword id="KW-0946">Virion</keyword>
<organismHost>
    <name type="scientific">Ornithodoros</name>
    <name type="common">relapsing fever ticks</name>
    <dbReference type="NCBI Taxonomy" id="6937"/>
</organismHost>
<organismHost>
    <name type="scientific">Sus scrofa</name>
    <name type="common">Pig</name>
    <dbReference type="NCBI Taxonomy" id="9823"/>
</organismHost>
<feature type="chain" id="PRO_0000133805" description="DNA-directed RNA polymerase RPB6 homolog">
    <location>
        <begin position="1"/>
        <end position="147"/>
    </location>
</feature>
<feature type="helix" evidence="6">
    <location>
        <begin position="45"/>
        <end position="48"/>
    </location>
</feature>
<feature type="strand" evidence="6">
    <location>
        <begin position="55"/>
        <end position="59"/>
    </location>
</feature>
<feature type="helix" evidence="6">
    <location>
        <begin position="62"/>
        <end position="64"/>
    </location>
</feature>
<feature type="helix" evidence="6">
    <location>
        <begin position="73"/>
        <end position="89"/>
    </location>
</feature>
<feature type="helix" evidence="6">
    <location>
        <begin position="102"/>
        <end position="111"/>
    </location>
</feature>
<feature type="strand" evidence="6">
    <location>
        <begin position="117"/>
        <end position="126"/>
    </location>
</feature>
<feature type="turn" evidence="6">
    <location>
        <begin position="127"/>
        <end position="129"/>
    </location>
</feature>
<feature type="strand" evidence="6">
    <location>
        <begin position="130"/>
        <end position="136"/>
    </location>
</feature>
<feature type="helix" evidence="6">
    <location>
        <begin position="138"/>
        <end position="140"/>
    </location>
</feature>
<reference key="1">
    <citation type="journal article" date="1995" name="Virology">
        <title>Analysis of the complete nucleotide sequence of African swine fever virus.</title>
        <authorList>
            <person name="Yanez R.J."/>
            <person name="Rodriguez J.M."/>
            <person name="Nogal M.L."/>
            <person name="Yuste L."/>
            <person name="Enriquez C."/>
            <person name="Rodriguez J.F."/>
            <person name="Vinuela E."/>
        </authorList>
    </citation>
    <scope>NUCLEOTIDE SEQUENCE [LARGE SCALE GENOMIC DNA]</scope>
</reference>
<reference key="2">
    <citation type="journal article" date="1993" name="Nucleic Acids Res.">
        <title>An African swine fever virus gene with a similarity to eukaryotic RNA polymerase subunit 6.</title>
        <authorList>
            <person name="Lu Z."/>
            <person name="Kutish G.F."/>
            <person name="Sussman M.D."/>
            <person name="Rock D.L."/>
        </authorList>
    </citation>
    <scope>FUNCTION</scope>
</reference>
<reference key="3">
    <citation type="journal article" date="2013" name="Virus Res.">
        <title>African swine fever virus transcription.</title>
        <authorList>
            <person name="Rodriguez J.M."/>
            <person name="Salas M.L."/>
        </authorList>
    </citation>
    <scope>REVIEW</scope>
</reference>
<reference key="4">
    <citation type="journal article" date="2018" name="J. Virol.">
        <title>A Proteomic Atlas of the African Swine Fever Virus Particle.</title>
        <authorList>
            <person name="Alejo A."/>
            <person name="Matamoros T."/>
            <person name="Guerra M."/>
            <person name="Andres G."/>
        </authorList>
    </citation>
    <scope>SUBCELLULAR LOCATION</scope>
</reference>
<reference key="5">
    <citation type="journal article" date="2020" name="Biochem. Soc. Trans.">
        <title>Transcriptome view of a killer: African swine fever virus.</title>
        <authorList>
            <person name="Cackett G."/>
            <person name="Sykora M."/>
            <person name="Werner F."/>
        </authorList>
    </citation>
    <scope>REVIEW</scope>
</reference>
<sequence>MADNDNEDIIMDDLVEEYVETEEENFVDSEEESEDKDEIVESPSICEGFVQASSQTLVIIPDNERITSNVLTTFEATRLVAVRAQQLAINGSTMLKKKYSSPIDIAKQELFNRKIPLLVMRCIKVTPEGQKIVEIWNPREMGIPLLD</sequence>
<proteinExistence type="evidence at protein level"/>
<name>RPB6_ASFB7</name>
<accession>P42484</accession>
<protein>
    <recommendedName>
        <fullName evidence="2">DNA-directed RNA polymerase RPB6 homolog</fullName>
        <shortName evidence="4">RPB6 homolog</shortName>
    </recommendedName>
</protein>
<comment type="function">
    <text evidence="5">Component of the DNA-directed RNA polymerase (RNAP) that catalyzes the transcription in the cytoplasm of viral DNA into RNA using the four ribonucleoside triphosphates as substrates.</text>
</comment>
<comment type="subunit">
    <text evidence="3">Part of the viral DNA-directed RNA polymerase that consists of 8 polII-like subunits (RPB1, RPB2, RPB3, RPB5, RPB6, RPB7, RPB9, RPB10), a capping enzyme and a termination factor.</text>
</comment>
<comment type="subcellular location">
    <subcellularLocation>
        <location evidence="4">Host cytoplasm</location>
    </subcellularLocation>
    <subcellularLocation>
        <location evidence="1">Virion</location>
    </subcellularLocation>
    <text evidence="1">Found in association with viral nucleoid.</text>
</comment>
<comment type="similarity">
    <text evidence="4">Belongs to the archaeal RpoK/eukaryotic RPB6 RNA polymerase subunit family.</text>
</comment>
<organism>
    <name type="scientific">African swine fever virus (strain Badajoz 1971 Vero-adapted)</name>
    <name type="common">Ba71V</name>
    <name type="synonym">ASFV</name>
    <dbReference type="NCBI Taxonomy" id="10498"/>
    <lineage>
        <taxon>Viruses</taxon>
        <taxon>Varidnaviria</taxon>
        <taxon>Bamfordvirae</taxon>
        <taxon>Nucleocytoviricota</taxon>
        <taxon>Pokkesviricetes</taxon>
        <taxon>Asfuvirales</taxon>
        <taxon>Asfarviridae</taxon>
        <taxon>Asfivirus</taxon>
        <taxon>African swine fever virus</taxon>
    </lineage>
</organism>
<dbReference type="EMBL" id="U18466">
    <property type="protein sequence ID" value="AAA65299.1"/>
    <property type="molecule type" value="Genomic_DNA"/>
</dbReference>
<dbReference type="RefSeq" id="NP_042763.1">
    <property type="nucleotide sequence ID" value="NC_001659.2"/>
</dbReference>
<dbReference type="PDB" id="8Q3B">
    <property type="method" value="EM"/>
    <property type="resolution" value="2.69 A"/>
    <property type="chains" value="F=1-147"/>
</dbReference>
<dbReference type="PDB" id="8Q3K">
    <property type="method" value="EM"/>
    <property type="resolution" value="2.92 A"/>
    <property type="chains" value="F=1-147"/>
</dbReference>
<dbReference type="PDB" id="8XX4">
    <property type="method" value="EM"/>
    <property type="resolution" value="2.60 A"/>
    <property type="chains" value="E=39-147"/>
</dbReference>
<dbReference type="PDB" id="8XX5">
    <property type="method" value="EM"/>
    <property type="resolution" value="2.40 A"/>
    <property type="chains" value="E=9-147"/>
</dbReference>
<dbReference type="PDB" id="8XXP">
    <property type="method" value="EM"/>
    <property type="resolution" value="2.60 A"/>
    <property type="chains" value="E=41-147"/>
</dbReference>
<dbReference type="PDB" id="8XXT">
    <property type="method" value="EM"/>
    <property type="resolution" value="2.85 A"/>
    <property type="chains" value="E=9-147"/>
</dbReference>
<dbReference type="PDB" id="8XY6">
    <property type="method" value="EM"/>
    <property type="resolution" value="3.00 A"/>
    <property type="chains" value="E=18-147"/>
</dbReference>
<dbReference type="PDB" id="8Y0E">
    <property type="method" value="EM"/>
    <property type="resolution" value="3.00 A"/>
    <property type="chains" value="E=1-147"/>
</dbReference>
<dbReference type="PDB" id="8YQT">
    <property type="method" value="EM"/>
    <property type="resolution" value="2.56 A"/>
    <property type="chains" value="E=1-147"/>
</dbReference>
<dbReference type="PDB" id="8YQU">
    <property type="method" value="EM"/>
    <property type="resolution" value="2.85 A"/>
    <property type="chains" value="E=1-147"/>
</dbReference>
<dbReference type="PDB" id="8YQV">
    <property type="method" value="EM"/>
    <property type="resolution" value="2.67 A"/>
    <property type="chains" value="E=1-147"/>
</dbReference>
<dbReference type="PDB" id="8YQW">
    <property type="method" value="EM"/>
    <property type="resolution" value="2.68 A"/>
    <property type="chains" value="E=1-147"/>
</dbReference>
<dbReference type="PDB" id="8YQY">
    <property type="method" value="EM"/>
    <property type="resolution" value="3.68 A"/>
    <property type="chains" value="E=1-147"/>
</dbReference>
<dbReference type="PDB" id="8YQZ">
    <property type="method" value="EM"/>
    <property type="resolution" value="2.78 A"/>
    <property type="chains" value="E=1-147"/>
</dbReference>
<dbReference type="PDBsum" id="8Q3B"/>
<dbReference type="PDBsum" id="8Q3K"/>
<dbReference type="PDBsum" id="8XX4"/>
<dbReference type="PDBsum" id="8XX5"/>
<dbReference type="PDBsum" id="8XXP"/>
<dbReference type="PDBsum" id="8XXT"/>
<dbReference type="PDBsum" id="8XY6"/>
<dbReference type="PDBsum" id="8Y0E"/>
<dbReference type="PDBsum" id="8YQT"/>
<dbReference type="PDBsum" id="8YQU"/>
<dbReference type="PDBsum" id="8YQV"/>
<dbReference type="PDBsum" id="8YQW"/>
<dbReference type="PDBsum" id="8YQY"/>
<dbReference type="PDBsum" id="8YQZ"/>
<dbReference type="EMDB" id="EMD-18120"/>
<dbReference type="EMDB" id="EMD-18129"/>
<dbReference type="SMR" id="P42484"/>
<dbReference type="GeneID" id="22220299"/>
<dbReference type="KEGG" id="vg:22220299"/>
<dbReference type="Proteomes" id="UP000000624">
    <property type="component" value="Segment"/>
</dbReference>
<dbReference type="GO" id="GO:0000428">
    <property type="term" value="C:DNA-directed RNA polymerase complex"/>
    <property type="evidence" value="ECO:0007669"/>
    <property type="project" value="UniProtKB-KW"/>
</dbReference>
<dbReference type="GO" id="GO:0030430">
    <property type="term" value="C:host cell cytoplasm"/>
    <property type="evidence" value="ECO:0007669"/>
    <property type="project" value="UniProtKB-SubCell"/>
</dbReference>
<dbReference type="GO" id="GO:0044423">
    <property type="term" value="C:virion component"/>
    <property type="evidence" value="ECO:0007669"/>
    <property type="project" value="UniProtKB-KW"/>
</dbReference>
<dbReference type="GO" id="GO:0003677">
    <property type="term" value="F:DNA binding"/>
    <property type="evidence" value="ECO:0007669"/>
    <property type="project" value="InterPro"/>
</dbReference>
<dbReference type="GO" id="GO:0003899">
    <property type="term" value="F:DNA-directed RNA polymerase activity"/>
    <property type="evidence" value="ECO:0007669"/>
    <property type="project" value="InterPro"/>
</dbReference>
<dbReference type="GO" id="GO:0006360">
    <property type="term" value="P:transcription by RNA polymerase I"/>
    <property type="evidence" value="ECO:0007669"/>
    <property type="project" value="TreeGrafter"/>
</dbReference>
<dbReference type="GO" id="GO:0006366">
    <property type="term" value="P:transcription by RNA polymerase II"/>
    <property type="evidence" value="ECO:0007669"/>
    <property type="project" value="TreeGrafter"/>
</dbReference>
<dbReference type="GO" id="GO:0042797">
    <property type="term" value="P:tRNA transcription by RNA polymerase III"/>
    <property type="evidence" value="ECO:0007669"/>
    <property type="project" value="TreeGrafter"/>
</dbReference>
<dbReference type="GO" id="GO:0019083">
    <property type="term" value="P:viral transcription"/>
    <property type="evidence" value="ECO:0007669"/>
    <property type="project" value="UniProtKB-KW"/>
</dbReference>
<dbReference type="Gene3D" id="3.90.940.10">
    <property type="match status" value="1"/>
</dbReference>
<dbReference type="InterPro" id="IPR020708">
    <property type="entry name" value="DNA-dir_RNA_polK_14-18kDa_CS"/>
</dbReference>
<dbReference type="InterPro" id="IPR006110">
    <property type="entry name" value="Pol_omega/Rpo6/RPB6"/>
</dbReference>
<dbReference type="InterPro" id="IPR036161">
    <property type="entry name" value="RPB6/omega-like_sf"/>
</dbReference>
<dbReference type="InterPro" id="IPR006111">
    <property type="entry name" value="Rpo6/Rpb6"/>
</dbReference>
<dbReference type="PANTHER" id="PTHR47227">
    <property type="entry name" value="DNA-DIRECTED RNA POLYMERASE SUBUNIT K"/>
    <property type="match status" value="1"/>
</dbReference>
<dbReference type="PANTHER" id="PTHR47227:SF5">
    <property type="entry name" value="DNA-DIRECTED RNA POLYMERASES I, II, AND III SUBUNIT RPABC2"/>
    <property type="match status" value="1"/>
</dbReference>
<dbReference type="Pfam" id="PF01192">
    <property type="entry name" value="RNA_pol_Rpb6"/>
    <property type="match status" value="1"/>
</dbReference>
<dbReference type="PIRSF" id="PIRSF000778">
    <property type="entry name" value="RpoK/RPB6"/>
    <property type="match status" value="1"/>
</dbReference>
<dbReference type="SMART" id="SM01409">
    <property type="entry name" value="RNA_pol_Rpb6"/>
    <property type="match status" value="1"/>
</dbReference>
<dbReference type="SUPFAM" id="SSF63562">
    <property type="entry name" value="RPB6/omega subunit-like"/>
    <property type="match status" value="1"/>
</dbReference>
<dbReference type="PROSITE" id="PS01111">
    <property type="entry name" value="RNA_POL_K_14KD"/>
    <property type="match status" value="1"/>
</dbReference>